<reference key="1">
    <citation type="journal article" date="1998" name="Nature">
        <title>Deciphering the biology of Mycobacterium tuberculosis from the complete genome sequence.</title>
        <authorList>
            <person name="Cole S.T."/>
            <person name="Brosch R."/>
            <person name="Parkhill J."/>
            <person name="Garnier T."/>
            <person name="Churcher C.M."/>
            <person name="Harris D.E."/>
            <person name="Gordon S.V."/>
            <person name="Eiglmeier K."/>
            <person name="Gas S."/>
            <person name="Barry C.E. III"/>
            <person name="Tekaia F."/>
            <person name="Badcock K."/>
            <person name="Basham D."/>
            <person name="Brown D."/>
            <person name="Chillingworth T."/>
            <person name="Connor R."/>
            <person name="Davies R.M."/>
            <person name="Devlin K."/>
            <person name="Feltwell T."/>
            <person name="Gentles S."/>
            <person name="Hamlin N."/>
            <person name="Holroyd S."/>
            <person name="Hornsby T."/>
            <person name="Jagels K."/>
            <person name="Krogh A."/>
            <person name="McLean J."/>
            <person name="Moule S."/>
            <person name="Murphy L.D."/>
            <person name="Oliver S."/>
            <person name="Osborne J."/>
            <person name="Quail M.A."/>
            <person name="Rajandream M.A."/>
            <person name="Rogers J."/>
            <person name="Rutter S."/>
            <person name="Seeger K."/>
            <person name="Skelton S."/>
            <person name="Squares S."/>
            <person name="Squares R."/>
            <person name="Sulston J.E."/>
            <person name="Taylor K."/>
            <person name="Whitehead S."/>
            <person name="Barrell B.G."/>
        </authorList>
    </citation>
    <scope>NUCLEOTIDE SEQUENCE [LARGE SCALE GENOMIC DNA]</scope>
    <source>
        <strain>ATCC 25618 / H37Rv</strain>
    </source>
</reference>
<reference key="2">
    <citation type="journal article" date="2011" name="Mol. Cell. Proteomics">
        <title>Proteogenomic analysis of Mycobacterium tuberculosis by high resolution mass spectrometry.</title>
        <authorList>
            <person name="Kelkar D.S."/>
            <person name="Kumar D."/>
            <person name="Kumar P."/>
            <person name="Balakrishnan L."/>
            <person name="Muthusamy B."/>
            <person name="Yadav A.K."/>
            <person name="Shrivastava P."/>
            <person name="Marimuthu A."/>
            <person name="Anand S."/>
            <person name="Sundaram H."/>
            <person name="Kingsbury R."/>
            <person name="Harsha H.C."/>
            <person name="Nair B."/>
            <person name="Prasad T.S."/>
            <person name="Chauhan D.S."/>
            <person name="Katoch K."/>
            <person name="Katoch V.M."/>
            <person name="Kumar P."/>
            <person name="Chaerkady R."/>
            <person name="Ramachandran S."/>
            <person name="Dash D."/>
            <person name="Pandey A."/>
        </authorList>
    </citation>
    <scope>IDENTIFICATION BY MASS SPECTROMETRY [LARGE SCALE ANALYSIS]</scope>
    <source>
        <strain>ATCC 25618 / H37Rv</strain>
    </source>
</reference>
<organism>
    <name type="scientific">Mycobacterium tuberculosis (strain ATCC 25618 / H37Rv)</name>
    <dbReference type="NCBI Taxonomy" id="83332"/>
    <lineage>
        <taxon>Bacteria</taxon>
        <taxon>Bacillati</taxon>
        <taxon>Actinomycetota</taxon>
        <taxon>Actinomycetes</taxon>
        <taxon>Mycobacteriales</taxon>
        <taxon>Mycobacteriaceae</taxon>
        <taxon>Mycobacterium</taxon>
        <taxon>Mycobacterium tuberculosis complex</taxon>
    </lineage>
</organism>
<evidence type="ECO:0000255" key="1"/>
<evidence type="ECO:0000255" key="2">
    <source>
        <dbReference type="PROSITE-ProRule" id="PRU00691"/>
    </source>
</evidence>
<dbReference type="EMBL" id="AL123456">
    <property type="protein sequence ID" value="CCP44082.1"/>
    <property type="molecule type" value="Genomic_DNA"/>
</dbReference>
<dbReference type="PIR" id="H70769">
    <property type="entry name" value="H70769"/>
</dbReference>
<dbReference type="RefSeq" id="NP_215840.1">
    <property type="nucleotide sequence ID" value="NC_000962.3"/>
</dbReference>
<dbReference type="RefSeq" id="WP_003406887.1">
    <property type="nucleotide sequence ID" value="NZ_NVQJ01000059.1"/>
</dbReference>
<dbReference type="SMR" id="P9WG61"/>
<dbReference type="FunCoup" id="P9WG61">
    <property type="interactions" value="4"/>
</dbReference>
<dbReference type="STRING" id="83332.Rv1324"/>
<dbReference type="PaxDb" id="83332-Rv1324"/>
<dbReference type="DNASU" id="886897"/>
<dbReference type="GeneID" id="886897"/>
<dbReference type="KEGG" id="mtu:Rv1324"/>
<dbReference type="KEGG" id="mtv:RVBD_1324"/>
<dbReference type="PATRIC" id="fig|83332.111.peg.1479"/>
<dbReference type="TubercuList" id="Rv1324"/>
<dbReference type="eggNOG" id="COG3118">
    <property type="taxonomic scope" value="Bacteria"/>
</dbReference>
<dbReference type="InParanoid" id="P9WG61"/>
<dbReference type="OrthoDB" id="5181746at2"/>
<dbReference type="PhylomeDB" id="P9WG61"/>
<dbReference type="Proteomes" id="UP000001584">
    <property type="component" value="Chromosome"/>
</dbReference>
<dbReference type="GO" id="GO:0009274">
    <property type="term" value="C:peptidoglycan-based cell wall"/>
    <property type="evidence" value="ECO:0007005"/>
    <property type="project" value="MTBBASE"/>
</dbReference>
<dbReference type="GO" id="GO:0005886">
    <property type="term" value="C:plasma membrane"/>
    <property type="evidence" value="ECO:0007005"/>
    <property type="project" value="MTBBASE"/>
</dbReference>
<dbReference type="GO" id="GO:0016491">
    <property type="term" value="F:oxidoreductase activity"/>
    <property type="evidence" value="ECO:0007669"/>
    <property type="project" value="UniProtKB-ARBA"/>
</dbReference>
<dbReference type="GO" id="GO:0045454">
    <property type="term" value="P:cell redox homeostasis"/>
    <property type="evidence" value="ECO:0000318"/>
    <property type="project" value="GO_Central"/>
</dbReference>
<dbReference type="GO" id="GO:0006950">
    <property type="term" value="P:response to stress"/>
    <property type="evidence" value="ECO:0007669"/>
    <property type="project" value="UniProtKB-ARBA"/>
</dbReference>
<dbReference type="CDD" id="cd02956">
    <property type="entry name" value="ybbN"/>
    <property type="match status" value="1"/>
</dbReference>
<dbReference type="Gene3D" id="3.40.30.10">
    <property type="entry name" value="Glutaredoxin"/>
    <property type="match status" value="1"/>
</dbReference>
<dbReference type="Gene3D" id="1.25.40.10">
    <property type="entry name" value="Tetratricopeptide repeat domain"/>
    <property type="match status" value="1"/>
</dbReference>
<dbReference type="InterPro" id="IPR036249">
    <property type="entry name" value="Thioredoxin-like_sf"/>
</dbReference>
<dbReference type="InterPro" id="IPR013766">
    <property type="entry name" value="Thioredoxin_domain"/>
</dbReference>
<dbReference type="InterPro" id="IPR011990">
    <property type="entry name" value="TPR-like_helical_dom_sf"/>
</dbReference>
<dbReference type="PANTHER" id="PTHR43601">
    <property type="entry name" value="THIOREDOXIN, MITOCHONDRIAL"/>
    <property type="match status" value="1"/>
</dbReference>
<dbReference type="PANTHER" id="PTHR43601:SF3">
    <property type="entry name" value="THIOREDOXIN, MITOCHONDRIAL"/>
    <property type="match status" value="1"/>
</dbReference>
<dbReference type="Pfam" id="PF00085">
    <property type="entry name" value="Thioredoxin"/>
    <property type="match status" value="1"/>
</dbReference>
<dbReference type="Pfam" id="PF14561">
    <property type="entry name" value="TPR_20"/>
    <property type="match status" value="1"/>
</dbReference>
<dbReference type="SUPFAM" id="SSF52833">
    <property type="entry name" value="Thioredoxin-like"/>
    <property type="match status" value="1"/>
</dbReference>
<dbReference type="PROSITE" id="PS51352">
    <property type="entry name" value="THIOREDOXIN_2"/>
    <property type="match status" value="1"/>
</dbReference>
<proteinExistence type="evidence at protein level"/>
<sequence>MTRPRPPLGPAMAGAVDLSGIKQRAQQNAAASTDADRALSTPSGVTEITEANFEDEVIVRSDEVPVVVLLWSPRSEVCVDLLDTLSGLAAAAKGKWSLASVNVDVAPRVAQIFGVQAVPTVVALAAGQPISSFQGLQPADQLSRWVDSLLSATAGKLKGAASSEESTEVDPAVAQARQQLEDGDFVAARKSYQAILDANPGSVEAKAAIRQIEFLIRATAQRPDAVSVADSLSDDIDAAFAAADVQVLNQDVSAAFERLIALVRRTSGEERTRVRTRLIELFELFDPADPEVVAGRRNLANALY</sequence>
<accession>P9WG61</accession>
<accession>L0T6I9</accession>
<accession>P64807</accession>
<accession>Q10636</accession>
<feature type="signal peptide" evidence="1">
    <location>
        <begin position="1"/>
        <end position="15"/>
    </location>
</feature>
<feature type="chain" id="PRO_0000014093" description="Uncharacterized protein Rv1324">
    <location>
        <begin position="16"/>
        <end position="304"/>
    </location>
</feature>
<feature type="domain" description="Thioredoxin" evidence="2">
    <location>
        <begin position="28"/>
        <end position="151"/>
    </location>
</feature>
<protein>
    <recommendedName>
        <fullName>Uncharacterized protein Rv1324</fullName>
    </recommendedName>
</protein>
<gene>
    <name type="ordered locus">Rv1324</name>
    <name type="ORF">MTCY130.09</name>
</gene>
<keyword id="KW-1185">Reference proteome</keyword>
<keyword id="KW-0732">Signal</keyword>
<name>Y1324_MYCTU</name>